<protein>
    <recommendedName>
        <fullName>T-cell differentiation antigen CD6</fullName>
    </recommendedName>
    <cdAntigenName>CD6</cdAntigenName>
</protein>
<reference key="1">
    <citation type="journal article" date="1995" name="J. Immunol.">
        <title>Identification of a mouse protein homologous to the human CD6 T cell surface protein and sequence of the corresponding cDNA.</title>
        <authorList>
            <person name="Robinson W.H."/>
            <person name="Prohaska S.S."/>
            <person name="Santoro J.C."/>
            <person name="Robinson H.L."/>
            <person name="Parnes J.R."/>
        </authorList>
    </citation>
    <scope>NUCLEOTIDE SEQUENCE [MRNA]</scope>
    <scope>ALTERNATIVE SPLICING</scope>
    <source>
        <tissue>Thymocyte</tissue>
    </source>
</reference>
<reference key="2">
    <citation type="journal article" date="1995" name="Mol. Immunol.">
        <title>Cloning and characterization of murine CD6.</title>
        <authorList>
            <person name="Whitney G."/>
            <person name="Bowen M."/>
            <person name="Neubauer M."/>
            <person name="Aruffo A."/>
        </authorList>
    </citation>
    <scope>NUCLEOTIDE SEQUENCE [MRNA] (ISOFORM 3)</scope>
</reference>
<reference key="3">
    <citation type="journal article" date="2005" name="Science">
        <title>The transcriptional landscape of the mammalian genome.</title>
        <authorList>
            <person name="Carninci P."/>
            <person name="Kasukawa T."/>
            <person name="Katayama S."/>
            <person name="Gough J."/>
            <person name="Frith M.C."/>
            <person name="Maeda N."/>
            <person name="Oyama R."/>
            <person name="Ravasi T."/>
            <person name="Lenhard B."/>
            <person name="Wells C."/>
            <person name="Kodzius R."/>
            <person name="Shimokawa K."/>
            <person name="Bajic V.B."/>
            <person name="Brenner S.E."/>
            <person name="Batalov S."/>
            <person name="Forrest A.R."/>
            <person name="Zavolan M."/>
            <person name="Davis M.J."/>
            <person name="Wilming L.G."/>
            <person name="Aidinis V."/>
            <person name="Allen J.E."/>
            <person name="Ambesi-Impiombato A."/>
            <person name="Apweiler R."/>
            <person name="Aturaliya R.N."/>
            <person name="Bailey T.L."/>
            <person name="Bansal M."/>
            <person name="Baxter L."/>
            <person name="Beisel K.W."/>
            <person name="Bersano T."/>
            <person name="Bono H."/>
            <person name="Chalk A.M."/>
            <person name="Chiu K.P."/>
            <person name="Choudhary V."/>
            <person name="Christoffels A."/>
            <person name="Clutterbuck D.R."/>
            <person name="Crowe M.L."/>
            <person name="Dalla E."/>
            <person name="Dalrymple B.P."/>
            <person name="de Bono B."/>
            <person name="Della Gatta G."/>
            <person name="di Bernardo D."/>
            <person name="Down T."/>
            <person name="Engstrom P."/>
            <person name="Fagiolini M."/>
            <person name="Faulkner G."/>
            <person name="Fletcher C.F."/>
            <person name="Fukushima T."/>
            <person name="Furuno M."/>
            <person name="Futaki S."/>
            <person name="Gariboldi M."/>
            <person name="Georgii-Hemming P."/>
            <person name="Gingeras T.R."/>
            <person name="Gojobori T."/>
            <person name="Green R.E."/>
            <person name="Gustincich S."/>
            <person name="Harbers M."/>
            <person name="Hayashi Y."/>
            <person name="Hensch T.K."/>
            <person name="Hirokawa N."/>
            <person name="Hill D."/>
            <person name="Huminiecki L."/>
            <person name="Iacono M."/>
            <person name="Ikeo K."/>
            <person name="Iwama A."/>
            <person name="Ishikawa T."/>
            <person name="Jakt M."/>
            <person name="Kanapin A."/>
            <person name="Katoh M."/>
            <person name="Kawasawa Y."/>
            <person name="Kelso J."/>
            <person name="Kitamura H."/>
            <person name="Kitano H."/>
            <person name="Kollias G."/>
            <person name="Krishnan S.P."/>
            <person name="Kruger A."/>
            <person name="Kummerfeld S.K."/>
            <person name="Kurochkin I.V."/>
            <person name="Lareau L.F."/>
            <person name="Lazarevic D."/>
            <person name="Lipovich L."/>
            <person name="Liu J."/>
            <person name="Liuni S."/>
            <person name="McWilliam S."/>
            <person name="Madan Babu M."/>
            <person name="Madera M."/>
            <person name="Marchionni L."/>
            <person name="Matsuda H."/>
            <person name="Matsuzawa S."/>
            <person name="Miki H."/>
            <person name="Mignone F."/>
            <person name="Miyake S."/>
            <person name="Morris K."/>
            <person name="Mottagui-Tabar S."/>
            <person name="Mulder N."/>
            <person name="Nakano N."/>
            <person name="Nakauchi H."/>
            <person name="Ng P."/>
            <person name="Nilsson R."/>
            <person name="Nishiguchi S."/>
            <person name="Nishikawa S."/>
            <person name="Nori F."/>
            <person name="Ohara O."/>
            <person name="Okazaki Y."/>
            <person name="Orlando V."/>
            <person name="Pang K.C."/>
            <person name="Pavan W.J."/>
            <person name="Pavesi G."/>
            <person name="Pesole G."/>
            <person name="Petrovsky N."/>
            <person name="Piazza S."/>
            <person name="Reed J."/>
            <person name="Reid J.F."/>
            <person name="Ring B.Z."/>
            <person name="Ringwald M."/>
            <person name="Rost B."/>
            <person name="Ruan Y."/>
            <person name="Salzberg S.L."/>
            <person name="Sandelin A."/>
            <person name="Schneider C."/>
            <person name="Schoenbach C."/>
            <person name="Sekiguchi K."/>
            <person name="Semple C.A."/>
            <person name="Seno S."/>
            <person name="Sessa L."/>
            <person name="Sheng Y."/>
            <person name="Shibata Y."/>
            <person name="Shimada H."/>
            <person name="Shimada K."/>
            <person name="Silva D."/>
            <person name="Sinclair B."/>
            <person name="Sperling S."/>
            <person name="Stupka E."/>
            <person name="Sugiura K."/>
            <person name="Sultana R."/>
            <person name="Takenaka Y."/>
            <person name="Taki K."/>
            <person name="Tammoja K."/>
            <person name="Tan S.L."/>
            <person name="Tang S."/>
            <person name="Taylor M.S."/>
            <person name="Tegner J."/>
            <person name="Teichmann S.A."/>
            <person name="Ueda H.R."/>
            <person name="van Nimwegen E."/>
            <person name="Verardo R."/>
            <person name="Wei C.L."/>
            <person name="Yagi K."/>
            <person name="Yamanishi H."/>
            <person name="Zabarovsky E."/>
            <person name="Zhu S."/>
            <person name="Zimmer A."/>
            <person name="Hide W."/>
            <person name="Bult C."/>
            <person name="Grimmond S.M."/>
            <person name="Teasdale R.D."/>
            <person name="Liu E.T."/>
            <person name="Brusic V."/>
            <person name="Quackenbush J."/>
            <person name="Wahlestedt C."/>
            <person name="Mattick J.S."/>
            <person name="Hume D.A."/>
            <person name="Kai C."/>
            <person name="Sasaki D."/>
            <person name="Tomaru Y."/>
            <person name="Fukuda S."/>
            <person name="Kanamori-Katayama M."/>
            <person name="Suzuki M."/>
            <person name="Aoki J."/>
            <person name="Arakawa T."/>
            <person name="Iida J."/>
            <person name="Imamura K."/>
            <person name="Itoh M."/>
            <person name="Kato T."/>
            <person name="Kawaji H."/>
            <person name="Kawagashira N."/>
            <person name="Kawashima T."/>
            <person name="Kojima M."/>
            <person name="Kondo S."/>
            <person name="Konno H."/>
            <person name="Nakano K."/>
            <person name="Ninomiya N."/>
            <person name="Nishio T."/>
            <person name="Okada M."/>
            <person name="Plessy C."/>
            <person name="Shibata K."/>
            <person name="Shiraki T."/>
            <person name="Suzuki S."/>
            <person name="Tagami M."/>
            <person name="Waki K."/>
            <person name="Watahiki A."/>
            <person name="Okamura-Oho Y."/>
            <person name="Suzuki H."/>
            <person name="Kawai J."/>
            <person name="Hayashizaki Y."/>
        </authorList>
    </citation>
    <scope>NUCLEOTIDE SEQUENCE [LARGE SCALE MRNA]</scope>
    <source>
        <strain>C57BL/6J</strain>
        <tissue>Thymus</tissue>
    </source>
</reference>
<reference key="4">
    <citation type="journal article" date="2006" name="Mol. Cell. Biol.">
        <title>CD6 regulates T-cell responses through activation-dependent recruitment of the positive regulator SLP-76.</title>
        <authorList>
            <person name="Hassan N.J."/>
            <person name="Simmonds S.J."/>
            <person name="Clarkson N.G."/>
            <person name="Hanrahan S."/>
            <person name="Puklavec M.J."/>
            <person name="Bomb M."/>
            <person name="Barclay A.N."/>
            <person name="Brown M.H."/>
        </authorList>
    </citation>
    <scope>SUBCELLULAR LOCATION</scope>
    <scope>INTERACTION WITH ALCAM</scope>
</reference>
<reference key="5">
    <citation type="journal article" date="2014" name="Nat. Immunol.">
        <title>Quantitative proteomics analysis of signalosome dynamics in primary T cells identifies the surface receptor CD6 as a Lat adaptor-independent TCR signaling hub.</title>
        <authorList>
            <person name="Roncagalli R."/>
            <person name="Hauri S."/>
            <person name="Fiore F."/>
            <person name="Liang Y."/>
            <person name="Chen Z."/>
            <person name="Sansoni A."/>
            <person name="Kanduri K."/>
            <person name="Joly R."/>
            <person name="Malzac A."/>
            <person name="Laehdesmaeki H."/>
            <person name="Lahesmaa R."/>
            <person name="Yamasaki S."/>
            <person name="Saito T."/>
            <person name="Malissen M."/>
            <person name="Aebersold R."/>
            <person name="Gstaiger M."/>
            <person name="Malissen B."/>
        </authorList>
    </citation>
    <scope>FUNCTION</scope>
    <scope>INTERACTION WITH LCP2 AND VAV1</scope>
    <scope>PHOSPHORYLATION</scope>
</reference>
<name>CD6_MOUSE</name>
<sequence>MWLFLGIAGLLTAVLSGLPSPAPSGQHKNGTIPNMTLDLEERLGIRLVNGSSRCSGSVKVLLESWEPVCAAHWNRAATEAVCKALNCGDSGKVTYLMPPTSELPPGATSGNTSSAGNTTWARAPTERCRGANWQFCKVQDQECSSDRRLVWVTCAENQAVRLVDGSSRCAGRVEMLEHGEWGTVCDDTWDLQDAHVVCKQLKCGWAVKALAGLHFTPGQGPIHRDQVNCSGTEAYLWDCPGRPGDQYCGHKEDAGVVCSEHQSWRLTGGIDSCEGQVEVYFRGVWSTVCDSEWYPSEAKVLCRSLGCGSAVARPRGLPHSLDGRMYYSCKGQEPALSTCSWRFNNSNLCSQSRAARVVCSGSQRHLNLSTSEVPSRVPVTIESSVPVSVKDKDSQGLTLLILCIVLGILLLVSTIFIVILLLRAKGQYALPASVNHQQLSTANQAGINNYHPVPITIAKEAPMLFIQPRVPADSDSSSDSDYEHYDFSSQPPVALTTFYNSQRHRVTEEEAQQNRFQMPPLEEGLEELHVSHIPAADPRPCVADVPSRGSQYHVRNNSDSSTSSEEGYCNDPSSKPPPWNSQAFYSEKSPLTEQPPNLELAGSPAVFSGPSADDSSSTSSGEWYQNFQPPPQHPPAEQFECPGPPGPQTDSIDDDEEDYDDIGAA</sequence>
<proteinExistence type="evidence at protein level"/>
<gene>
    <name type="primary">Cd6</name>
</gene>
<dbReference type="EMBL" id="U37543">
    <property type="protein sequence ID" value="AAA81383.1"/>
    <property type="molecule type" value="mRNA"/>
</dbReference>
<dbReference type="EMBL" id="U37544">
    <property type="protein sequence ID" value="AAA81384.1"/>
    <property type="molecule type" value="mRNA"/>
</dbReference>
<dbReference type="EMBL" id="U12434">
    <property type="protein sequence ID" value="AAA64867.1"/>
    <property type="molecule type" value="mRNA"/>
</dbReference>
<dbReference type="EMBL" id="AK030822">
    <property type="protein sequence ID" value="BAC27147.1"/>
    <property type="molecule type" value="mRNA"/>
</dbReference>
<dbReference type="EMBL" id="AK030823">
    <property type="protein sequence ID" value="BAC27148.1"/>
    <property type="molecule type" value="mRNA"/>
</dbReference>
<dbReference type="CCDS" id="CCDS37917.1">
    <molecule id="Q61003-1"/>
</dbReference>
<dbReference type="CCDS" id="CCDS50391.1">
    <molecule id="Q61003-3"/>
</dbReference>
<dbReference type="PIR" id="I49100">
    <property type="entry name" value="I49100"/>
</dbReference>
<dbReference type="RefSeq" id="NP_001032890.1">
    <molecule id="Q61003-3"/>
    <property type="nucleotide sequence ID" value="NM_001037801.2"/>
</dbReference>
<dbReference type="RefSeq" id="NP_033982.3">
    <molecule id="Q61003-1"/>
    <property type="nucleotide sequence ID" value="NM_009852.3"/>
</dbReference>
<dbReference type="SMR" id="Q61003"/>
<dbReference type="BioGRID" id="198605">
    <property type="interactions" value="1"/>
</dbReference>
<dbReference type="CORUM" id="Q61003"/>
<dbReference type="FunCoup" id="Q61003">
    <property type="interactions" value="426"/>
</dbReference>
<dbReference type="IntAct" id="Q61003">
    <property type="interactions" value="3"/>
</dbReference>
<dbReference type="STRING" id="10090.ENSMUSP00000079172"/>
<dbReference type="GlyCosmos" id="Q61003">
    <property type="glycosylation" value="8 sites, No reported glycans"/>
</dbReference>
<dbReference type="GlyGen" id="Q61003">
    <property type="glycosylation" value="8 sites, 1 N-linked glycan (1 site)"/>
</dbReference>
<dbReference type="iPTMnet" id="Q61003"/>
<dbReference type="PhosphoSitePlus" id="Q61003"/>
<dbReference type="PaxDb" id="10090-ENSMUSP00000079172"/>
<dbReference type="PeptideAtlas" id="Q61003"/>
<dbReference type="ProteomicsDB" id="279988">
    <molecule id="Q61003-1"/>
</dbReference>
<dbReference type="ProteomicsDB" id="279989">
    <molecule id="Q61003-2"/>
</dbReference>
<dbReference type="ProteomicsDB" id="279990">
    <molecule id="Q61003-3"/>
</dbReference>
<dbReference type="Antibodypedia" id="3732">
    <property type="antibodies" value="1342 antibodies from 47 providers"/>
</dbReference>
<dbReference type="DNASU" id="12511"/>
<dbReference type="Ensembl" id="ENSMUST00000039043.15">
    <molecule id="Q61003-3"/>
    <property type="protein sequence ID" value="ENSMUSP00000046861.9"/>
    <property type="gene ID" value="ENSMUSG00000024670.18"/>
</dbReference>
<dbReference type="Ensembl" id="ENSMUST00000080292.12">
    <molecule id="Q61003-1"/>
    <property type="protein sequence ID" value="ENSMUSP00000079172.6"/>
    <property type="gene ID" value="ENSMUSG00000024670.18"/>
</dbReference>
<dbReference type="GeneID" id="12511"/>
<dbReference type="KEGG" id="mmu:12511"/>
<dbReference type="UCSC" id="uc008gqy.1">
    <molecule id="Q61003-1"/>
    <property type="organism name" value="mouse"/>
</dbReference>
<dbReference type="UCSC" id="uc008gqz.1">
    <molecule id="Q61003-3"/>
    <property type="organism name" value="mouse"/>
</dbReference>
<dbReference type="AGR" id="MGI:103566"/>
<dbReference type="CTD" id="923"/>
<dbReference type="MGI" id="MGI:103566">
    <property type="gene designation" value="Cd6"/>
</dbReference>
<dbReference type="VEuPathDB" id="HostDB:ENSMUSG00000024670"/>
<dbReference type="eggNOG" id="ENOG502QUHF">
    <property type="taxonomic scope" value="Eukaryota"/>
</dbReference>
<dbReference type="GeneTree" id="ENSGT00940000161029"/>
<dbReference type="HOGENOM" id="CLU_026713_1_0_1"/>
<dbReference type="InParanoid" id="Q61003"/>
<dbReference type="OMA" id="SEQICQD"/>
<dbReference type="OrthoDB" id="536948at2759"/>
<dbReference type="PhylomeDB" id="Q61003"/>
<dbReference type="TreeFam" id="TF329295"/>
<dbReference type="BioGRID-ORCS" id="12511">
    <property type="hits" value="2 hits in 78 CRISPR screens"/>
</dbReference>
<dbReference type="ChiTaRS" id="Cd6">
    <property type="organism name" value="mouse"/>
</dbReference>
<dbReference type="PRO" id="PR:Q61003"/>
<dbReference type="Proteomes" id="UP000000589">
    <property type="component" value="Chromosome 19"/>
</dbReference>
<dbReference type="RNAct" id="Q61003">
    <property type="molecule type" value="protein"/>
</dbReference>
<dbReference type="Bgee" id="ENSMUSG00000024670">
    <property type="expression patterns" value="Expressed in thymus and 38 other cell types or tissues"/>
</dbReference>
<dbReference type="ExpressionAtlas" id="Q61003">
    <property type="expression patterns" value="baseline and differential"/>
</dbReference>
<dbReference type="GO" id="GO:0009986">
    <property type="term" value="C:cell surface"/>
    <property type="evidence" value="ECO:0007669"/>
    <property type="project" value="Ensembl"/>
</dbReference>
<dbReference type="GO" id="GO:0001772">
    <property type="term" value="C:immunological synapse"/>
    <property type="evidence" value="ECO:0000250"/>
    <property type="project" value="UniProtKB"/>
</dbReference>
<dbReference type="GO" id="GO:0005886">
    <property type="term" value="C:plasma membrane"/>
    <property type="evidence" value="ECO:0000250"/>
    <property type="project" value="UniProtKB"/>
</dbReference>
<dbReference type="GO" id="GO:0042101">
    <property type="term" value="C:T cell receptor complex"/>
    <property type="evidence" value="ECO:0007669"/>
    <property type="project" value="Ensembl"/>
</dbReference>
<dbReference type="GO" id="GO:0042802">
    <property type="term" value="F:identical protein binding"/>
    <property type="evidence" value="ECO:0007669"/>
    <property type="project" value="Ensembl"/>
</dbReference>
<dbReference type="GO" id="GO:0001530">
    <property type="term" value="F:lipopolysaccharide binding"/>
    <property type="evidence" value="ECO:0000250"/>
    <property type="project" value="UniProtKB"/>
</dbReference>
<dbReference type="GO" id="GO:0070891">
    <property type="term" value="F:lipoteichoic acid binding"/>
    <property type="evidence" value="ECO:0000250"/>
    <property type="project" value="UniProtKB"/>
</dbReference>
<dbReference type="GO" id="GO:0019901">
    <property type="term" value="F:protein kinase binding"/>
    <property type="evidence" value="ECO:0007669"/>
    <property type="project" value="Ensembl"/>
</dbReference>
<dbReference type="GO" id="GO:0002438">
    <property type="term" value="P:acute inflammatory response to antigenic stimulus"/>
    <property type="evidence" value="ECO:0000250"/>
    <property type="project" value="UniProtKB"/>
</dbReference>
<dbReference type="GO" id="GO:0007157">
    <property type="term" value="P:heterophilic cell-cell adhesion via plasma membrane cell adhesion molecules"/>
    <property type="evidence" value="ECO:0000250"/>
    <property type="project" value="UniProtKB"/>
</dbReference>
<dbReference type="GO" id="GO:0001771">
    <property type="term" value="P:immunological synapse formation"/>
    <property type="evidence" value="ECO:0000250"/>
    <property type="project" value="UniProtKB"/>
</dbReference>
<dbReference type="GO" id="GO:0031663">
    <property type="term" value="P:lipopolysaccharide-mediated signaling pathway"/>
    <property type="evidence" value="ECO:0000250"/>
    <property type="project" value="UniProtKB"/>
</dbReference>
<dbReference type="GO" id="GO:1900017">
    <property type="term" value="P:positive regulation of cytokine production involved in inflammatory response"/>
    <property type="evidence" value="ECO:0000250"/>
    <property type="project" value="UniProtKB"/>
</dbReference>
<dbReference type="GO" id="GO:0042102">
    <property type="term" value="P:positive regulation of T cell proliferation"/>
    <property type="evidence" value="ECO:0000250"/>
    <property type="project" value="UniProtKB"/>
</dbReference>
<dbReference type="GO" id="GO:0032496">
    <property type="term" value="P:response to lipopolysaccharide"/>
    <property type="evidence" value="ECO:0000250"/>
    <property type="project" value="UniProtKB"/>
</dbReference>
<dbReference type="FunFam" id="3.10.250.10:FF:000017">
    <property type="entry name" value="CD6 molecule"/>
    <property type="match status" value="1"/>
</dbReference>
<dbReference type="FunFam" id="3.10.250.10:FF:000010">
    <property type="entry name" value="T-cell differentiation antigen CD6"/>
    <property type="match status" value="1"/>
</dbReference>
<dbReference type="Gene3D" id="3.10.250.10">
    <property type="entry name" value="SRCR-like domain"/>
    <property type="match status" value="3"/>
</dbReference>
<dbReference type="InterPro" id="IPR001190">
    <property type="entry name" value="SRCR"/>
</dbReference>
<dbReference type="InterPro" id="IPR036772">
    <property type="entry name" value="SRCR-like_dom_sf"/>
</dbReference>
<dbReference type="PANTHER" id="PTHR19331">
    <property type="entry name" value="SCAVENGER RECEPTOR DOMAIN-CONTAINING"/>
    <property type="match status" value="1"/>
</dbReference>
<dbReference type="PANTHER" id="PTHR19331:SF477">
    <property type="entry name" value="T-CELL DIFFERENTIATION ANTIGEN CD6"/>
    <property type="match status" value="1"/>
</dbReference>
<dbReference type="Pfam" id="PF00530">
    <property type="entry name" value="SRCR"/>
    <property type="match status" value="3"/>
</dbReference>
<dbReference type="PRINTS" id="PR00258">
    <property type="entry name" value="SPERACTRCPTR"/>
</dbReference>
<dbReference type="SMART" id="SM00202">
    <property type="entry name" value="SR"/>
    <property type="match status" value="3"/>
</dbReference>
<dbReference type="SUPFAM" id="SSF56487">
    <property type="entry name" value="SRCR-like"/>
    <property type="match status" value="3"/>
</dbReference>
<dbReference type="PROSITE" id="PS50287">
    <property type="entry name" value="SRCR_2"/>
    <property type="match status" value="3"/>
</dbReference>
<comment type="function">
    <text evidence="1 6">Cell adhesion molecule that mediates cell-cell contacts and regulates T-cell responses via its interaction with ALCAM/CD166. Contributes to signaling cascades triggered by activation of the TCR/CD3 complex (PubMed:24584089). Functions as a costimulatory molecule; promotes T-cell activation and proliferation. Contributes to the formation and maturation of the immunological synapse. Functions as a calcium-dependent pattern receptor that binds and aggregates both Gram-positive and Gram-negative bacteria. Binds both lipopolysaccharide (LPS) from Gram-negative bacteria and lipoteichoic acid from Gram-positive bacteria. LPS binding leads to the activation of signaling cascades and down-stream MAP kinases. Mediates activation of the inflammatory response and the secretion of pro-inflammatory cytokines in response to LPS.</text>
</comment>
<comment type="subunit">
    <text evidence="1 5 6">Interacts (via extracellular domain) with ALCAM/CD166 (via extracellular domain) (PubMed:16914752). Interacts with the TCR/CD3 complex subunit CD3E. Interacts (via tyrosine phosphorylated C-terminus) with LCP2 (via SH2 domain) (PubMed:24584089). Interacts (via glycosylated extracellular domain) with LGALS1 and LGALS3. Interaction with LGALS1 or LGALS3 inhibits interaction with ALCAM (By similarity). Interacts with VAV1 (PubMed:24584089).</text>
</comment>
<comment type="interaction">
    <interactant intactId="EBI-12601992">
        <id>Q61003</id>
    </interactant>
    <interactant intactId="EBI-5324248">
        <id>Q60787</id>
        <label>Lcp2</label>
    </interactant>
    <organismsDiffer>false</organismsDiffer>
    <experiments>9</experiments>
</comment>
<comment type="subcellular location">
    <subcellularLocation>
        <location evidence="5">Cell membrane</location>
        <topology evidence="1">Single-pass type I membrane protein</topology>
    </subcellularLocation>
    <text evidence="1">Detected at the immunological synapse, i.e, at the contact zone between antigen-presenting dendritic cells and T-cells. Colocalizes with the TCR/CD3 complex at the immunological synapse.</text>
</comment>
<comment type="alternative products">
    <event type="alternative splicing"/>
    <isoform>
        <id>Q61003-1</id>
        <name>1</name>
        <sequence type="displayed"/>
    </isoform>
    <isoform>
        <id>Q61003-2</id>
        <name>2</name>
        <sequence type="described" ref="VSP_006225 VSP_006226"/>
    </isoform>
    <isoform>
        <id>Q61003-3</id>
        <name>3</name>
        <sequence type="described" ref="VSP_006224"/>
    </isoform>
    <text>Additional isoforms seem to exist.</text>
</comment>
<comment type="tissue specificity">
    <text>Expressed predominantly in thymus, lymph node and spleen.</text>
</comment>
<comment type="PTM">
    <text evidence="1 6">After T-cell activation, becomes hyperphosphorylated on Ser and Thr residues (By similarity). Phosphorylated on tyrosine residues in response to stimulation of the TCR complex (PubMed:24584089).</text>
</comment>
<comment type="PTM">
    <text evidence="1">Glycosylated.</text>
</comment>
<organism>
    <name type="scientific">Mus musculus</name>
    <name type="common">Mouse</name>
    <dbReference type="NCBI Taxonomy" id="10090"/>
    <lineage>
        <taxon>Eukaryota</taxon>
        <taxon>Metazoa</taxon>
        <taxon>Chordata</taxon>
        <taxon>Craniata</taxon>
        <taxon>Vertebrata</taxon>
        <taxon>Euteleostomi</taxon>
        <taxon>Mammalia</taxon>
        <taxon>Eutheria</taxon>
        <taxon>Euarchontoglires</taxon>
        <taxon>Glires</taxon>
        <taxon>Rodentia</taxon>
        <taxon>Myomorpha</taxon>
        <taxon>Muroidea</taxon>
        <taxon>Muridae</taxon>
        <taxon>Murinae</taxon>
        <taxon>Mus</taxon>
        <taxon>Mus</taxon>
    </lineage>
</organism>
<keyword id="KW-0025">Alternative splicing</keyword>
<keyword id="KW-0130">Cell adhesion</keyword>
<keyword id="KW-1003">Cell membrane</keyword>
<keyword id="KW-1015">Disulfide bond</keyword>
<keyword id="KW-0325">Glycoprotein</keyword>
<keyword id="KW-0472">Membrane</keyword>
<keyword id="KW-0597">Phosphoprotein</keyword>
<keyword id="KW-1185">Reference proteome</keyword>
<keyword id="KW-0677">Repeat</keyword>
<keyword id="KW-0732">Signal</keyword>
<keyword id="KW-0812">Transmembrane</keyword>
<keyword id="KW-1133">Transmembrane helix</keyword>
<feature type="signal peptide" evidence="2">
    <location>
        <begin position="1"/>
        <end position="16"/>
    </location>
</feature>
<feature type="chain" id="PRO_0000033228" description="T-cell differentiation antigen CD6">
    <location>
        <begin position="17"/>
        <end position="665"/>
    </location>
</feature>
<feature type="topological domain" description="Extracellular" evidence="2">
    <location>
        <begin position="17"/>
        <end position="398"/>
    </location>
</feature>
<feature type="transmembrane region" description="Helical" evidence="2">
    <location>
        <begin position="399"/>
        <end position="419"/>
    </location>
</feature>
<feature type="topological domain" description="Cytoplasmic" evidence="2">
    <location>
        <begin position="420"/>
        <end position="665"/>
    </location>
</feature>
<feature type="domain" description="SRCR 1" evidence="3">
    <location>
        <begin position="45"/>
        <end position="155"/>
    </location>
</feature>
<feature type="domain" description="SRCR 2" evidence="3">
    <location>
        <begin position="160"/>
        <end position="259"/>
    </location>
</feature>
<feature type="domain" description="SRCR 3" evidence="3">
    <location>
        <begin position="264"/>
        <end position="360"/>
    </location>
</feature>
<feature type="region of interest" description="Disordered" evidence="4">
    <location>
        <begin position="536"/>
        <end position="665"/>
    </location>
</feature>
<feature type="compositionally biased region" description="Polar residues" evidence="4">
    <location>
        <begin position="548"/>
        <end position="565"/>
    </location>
</feature>
<feature type="compositionally biased region" description="Polar residues" evidence="4">
    <location>
        <begin position="580"/>
        <end position="595"/>
    </location>
</feature>
<feature type="compositionally biased region" description="Low complexity" evidence="4">
    <location>
        <begin position="608"/>
        <end position="621"/>
    </location>
</feature>
<feature type="compositionally biased region" description="Acidic residues" evidence="4">
    <location>
        <begin position="651"/>
        <end position="665"/>
    </location>
</feature>
<feature type="modified residue" description="Phosphotyrosine" evidence="1">
    <location>
        <position position="659"/>
    </location>
</feature>
<feature type="glycosylation site" description="N-linked (GlcNAc...) asparagine" evidence="2">
    <location>
        <position position="29"/>
    </location>
</feature>
<feature type="glycosylation site" description="N-linked (GlcNAc...) asparagine" evidence="2">
    <location>
        <position position="34"/>
    </location>
</feature>
<feature type="glycosylation site" description="N-linked (GlcNAc...) asparagine" evidence="2">
    <location>
        <position position="49"/>
    </location>
</feature>
<feature type="glycosylation site" description="N-linked (GlcNAc...) asparagine" evidence="2">
    <location>
        <position position="111"/>
    </location>
</feature>
<feature type="glycosylation site" description="N-linked (GlcNAc...) asparagine" evidence="2">
    <location>
        <position position="117"/>
    </location>
</feature>
<feature type="glycosylation site" description="N-linked (GlcNAc...) asparagine" evidence="2">
    <location>
        <position position="228"/>
    </location>
</feature>
<feature type="glycosylation site" description="N-linked (GlcNAc...) asparagine" evidence="2">
    <location>
        <position position="344"/>
    </location>
</feature>
<feature type="glycosylation site" description="N-linked (GlcNAc...) asparagine" evidence="2">
    <location>
        <position position="367"/>
    </location>
</feature>
<feature type="disulfide bond" evidence="1">
    <location>
        <begin position="54"/>
        <end position="87"/>
    </location>
</feature>
<feature type="disulfide bond" evidence="3">
    <location>
        <begin position="69"/>
        <end position="143"/>
    </location>
</feature>
<feature type="disulfide bond" evidence="3">
    <location>
        <begin position="82"/>
        <end position="154"/>
    </location>
</feature>
<feature type="disulfide bond" evidence="3">
    <location>
        <begin position="128"/>
        <end position="136"/>
    </location>
</feature>
<feature type="disulfide bond" evidence="1">
    <location>
        <begin position="169"/>
        <end position="203"/>
    </location>
</feature>
<feature type="disulfide bond" evidence="3">
    <location>
        <begin position="185"/>
        <end position="248"/>
    </location>
</feature>
<feature type="disulfide bond" evidence="3">
    <location>
        <begin position="198"/>
        <end position="258"/>
    </location>
</feature>
<feature type="disulfide bond" evidence="3">
    <location>
        <begin position="229"/>
        <end position="239"/>
    </location>
</feature>
<feature type="disulfide bond" evidence="3">
    <location>
        <begin position="289"/>
        <end position="349"/>
    </location>
</feature>
<feature type="disulfide bond" evidence="3">
    <location>
        <begin position="302"/>
        <end position="359"/>
    </location>
</feature>
<feature type="disulfide bond" evidence="3">
    <location>
        <begin position="329"/>
        <end position="339"/>
    </location>
</feature>
<feature type="splice variant" id="VSP_006224" description="In isoform 3." evidence="7">
    <original>APMLFIQPRVPADSDSSSDSDYEHYDFSSQPPVALTTFYN</original>
    <variation>D</variation>
    <location>
        <begin position="461"/>
        <end position="500"/>
    </location>
</feature>
<feature type="splice variant" id="VSP_006225" description="In isoform 2." evidence="8">
    <original>NSDSSTSSEEGYCNDPSSKPPPWNSQAFYS</original>
    <variation>KDKASGVRAESWVEQTGSGHFLGVVKGHAG</variation>
    <location>
        <begin position="557"/>
        <end position="586"/>
    </location>
</feature>
<feature type="splice variant" id="VSP_006226" description="In isoform 2." evidence="8">
    <location>
        <begin position="587"/>
        <end position="665"/>
    </location>
</feature>
<feature type="sequence conflict" description="In Ref. 2; AAA64867." evidence="8" ref="2">
    <original>L</original>
    <variation>F</variation>
    <location>
        <position position="5"/>
    </location>
</feature>
<feature type="sequence conflict" description="In Ref. 2; AAA64867." evidence="8" ref="2">
    <original>A</original>
    <variation>T</variation>
    <location>
        <position position="8"/>
    </location>
</feature>
<feature type="sequence conflict" description="In Ref. 1; AAA81383/AAA81384." evidence="8" ref="1">
    <original>A</original>
    <variation>D</variation>
    <location>
        <position position="194"/>
    </location>
</feature>
<feature type="sequence conflict" description="In Ref. 1; AAA81383/AAA81384." evidence="8" ref="1">
    <original>GL</original>
    <variation>AV</variation>
    <location>
        <begin position="316"/>
        <end position="317"/>
    </location>
</feature>
<evidence type="ECO:0000250" key="1">
    <source>
        <dbReference type="UniProtKB" id="P30203"/>
    </source>
</evidence>
<evidence type="ECO:0000255" key="2"/>
<evidence type="ECO:0000255" key="3">
    <source>
        <dbReference type="PROSITE-ProRule" id="PRU00196"/>
    </source>
</evidence>
<evidence type="ECO:0000256" key="4">
    <source>
        <dbReference type="SAM" id="MobiDB-lite"/>
    </source>
</evidence>
<evidence type="ECO:0000269" key="5">
    <source>
    </source>
</evidence>
<evidence type="ECO:0000269" key="6">
    <source>
    </source>
</evidence>
<evidence type="ECO:0000303" key="7">
    <source>
    </source>
</evidence>
<evidence type="ECO:0000305" key="8"/>
<accession>Q61003</accession>
<accession>Q60679</accession>
<accession>Q61004</accession>
<accession>Q8BGK1</accession>